<comment type="function">
    <text evidence="1">Plays an essential role in the initiation and regulation of chromosomal replication. ATP-DnaA binds to the origin of replication (oriC) to initiate formation of the DNA replication initiation complex once per cell cycle. Binds the DnaA box (a 9 base pair repeat at the origin) and separates the double-stranded (ds)DNA. Forms a right-handed helical filament on oriC DNA; dsDNA binds to the exterior of the filament while single-stranded (ss)DNA is stabiized in the filament's interior. The ATP-DnaA-oriC complex binds and stabilizes one strand of the AT-rich DNA unwinding element (DUE), permitting loading of DNA polymerase. After initiation quickly degrades to an ADP-DnaA complex that is not apt for DNA replication. Binds acidic phospholipids.</text>
</comment>
<comment type="subunit">
    <text evidence="1">Oligomerizes as a right-handed, spiral filament on DNA at oriC.</text>
</comment>
<comment type="subcellular location">
    <subcellularLocation>
        <location evidence="1">Cytoplasm</location>
    </subcellularLocation>
</comment>
<comment type="domain">
    <text evidence="1">Domain I is involved in oligomerization and binding regulators, domain II is flexibile and of varying length in different bacteria, domain III forms the AAA+ region, while domain IV binds dsDNA.</text>
</comment>
<comment type="similarity">
    <text evidence="1">Belongs to the DnaA family.</text>
</comment>
<gene>
    <name evidence="1" type="primary">dnaA</name>
    <name type="ordered locus">Erum2870</name>
    <name type="ordered locus">ERWE_CDS_02930</name>
</gene>
<dbReference type="EMBL" id="CR767821">
    <property type="protein sequence ID" value="CAH58004.1"/>
    <property type="molecule type" value="Genomic_DNA"/>
</dbReference>
<dbReference type="EMBL" id="CR925678">
    <property type="protein sequence ID" value="CAI26787.1"/>
    <property type="molecule type" value="Genomic_DNA"/>
</dbReference>
<dbReference type="RefSeq" id="WP_011154971.1">
    <property type="nucleotide sequence ID" value="NC_005295.2"/>
</dbReference>
<dbReference type="SMR" id="Q5HBP0"/>
<dbReference type="GeneID" id="33057866"/>
<dbReference type="KEGG" id="eru:Erum2870"/>
<dbReference type="KEGG" id="erw:ERWE_CDS_02930"/>
<dbReference type="eggNOG" id="COG0593">
    <property type="taxonomic scope" value="Bacteria"/>
</dbReference>
<dbReference type="HOGENOM" id="CLU_026910_3_0_5"/>
<dbReference type="Proteomes" id="UP000001021">
    <property type="component" value="Chromosome"/>
</dbReference>
<dbReference type="GO" id="GO:0005737">
    <property type="term" value="C:cytoplasm"/>
    <property type="evidence" value="ECO:0007669"/>
    <property type="project" value="UniProtKB-SubCell"/>
</dbReference>
<dbReference type="GO" id="GO:0005886">
    <property type="term" value="C:plasma membrane"/>
    <property type="evidence" value="ECO:0007669"/>
    <property type="project" value="TreeGrafter"/>
</dbReference>
<dbReference type="GO" id="GO:0005524">
    <property type="term" value="F:ATP binding"/>
    <property type="evidence" value="ECO:0007669"/>
    <property type="project" value="UniProtKB-UniRule"/>
</dbReference>
<dbReference type="GO" id="GO:0016887">
    <property type="term" value="F:ATP hydrolysis activity"/>
    <property type="evidence" value="ECO:0007669"/>
    <property type="project" value="InterPro"/>
</dbReference>
<dbReference type="GO" id="GO:0003688">
    <property type="term" value="F:DNA replication origin binding"/>
    <property type="evidence" value="ECO:0007669"/>
    <property type="project" value="UniProtKB-UniRule"/>
</dbReference>
<dbReference type="GO" id="GO:0008289">
    <property type="term" value="F:lipid binding"/>
    <property type="evidence" value="ECO:0007669"/>
    <property type="project" value="UniProtKB-KW"/>
</dbReference>
<dbReference type="GO" id="GO:0006270">
    <property type="term" value="P:DNA replication initiation"/>
    <property type="evidence" value="ECO:0007669"/>
    <property type="project" value="UniProtKB-UniRule"/>
</dbReference>
<dbReference type="GO" id="GO:0006275">
    <property type="term" value="P:regulation of DNA replication"/>
    <property type="evidence" value="ECO:0007669"/>
    <property type="project" value="UniProtKB-UniRule"/>
</dbReference>
<dbReference type="CDD" id="cd00009">
    <property type="entry name" value="AAA"/>
    <property type="match status" value="1"/>
</dbReference>
<dbReference type="CDD" id="cd06571">
    <property type="entry name" value="Bac_DnaA_C"/>
    <property type="match status" value="1"/>
</dbReference>
<dbReference type="FunFam" id="3.40.50.300:FF:000668">
    <property type="entry name" value="Chromosomal replication initiator protein DnaA"/>
    <property type="match status" value="1"/>
</dbReference>
<dbReference type="Gene3D" id="1.10.1750.10">
    <property type="match status" value="1"/>
</dbReference>
<dbReference type="Gene3D" id="1.10.8.60">
    <property type="match status" value="1"/>
</dbReference>
<dbReference type="Gene3D" id="3.30.300.180">
    <property type="match status" value="1"/>
</dbReference>
<dbReference type="Gene3D" id="3.40.50.300">
    <property type="entry name" value="P-loop containing nucleotide triphosphate hydrolases"/>
    <property type="match status" value="1"/>
</dbReference>
<dbReference type="HAMAP" id="MF_00377">
    <property type="entry name" value="DnaA_bact"/>
    <property type="match status" value="1"/>
</dbReference>
<dbReference type="InterPro" id="IPR003593">
    <property type="entry name" value="AAA+_ATPase"/>
</dbReference>
<dbReference type="InterPro" id="IPR001957">
    <property type="entry name" value="Chromosome_initiator_DnaA"/>
</dbReference>
<dbReference type="InterPro" id="IPR020591">
    <property type="entry name" value="Chromosome_initiator_DnaA-like"/>
</dbReference>
<dbReference type="InterPro" id="IPR018312">
    <property type="entry name" value="Chromosome_initiator_DnaA_CS"/>
</dbReference>
<dbReference type="InterPro" id="IPR013159">
    <property type="entry name" value="DnaA_C"/>
</dbReference>
<dbReference type="InterPro" id="IPR013317">
    <property type="entry name" value="DnaA_dom"/>
</dbReference>
<dbReference type="InterPro" id="IPR024633">
    <property type="entry name" value="DnaA_N_dom"/>
</dbReference>
<dbReference type="InterPro" id="IPR038454">
    <property type="entry name" value="DnaA_N_sf"/>
</dbReference>
<dbReference type="InterPro" id="IPR027417">
    <property type="entry name" value="P-loop_NTPase"/>
</dbReference>
<dbReference type="InterPro" id="IPR010921">
    <property type="entry name" value="Trp_repressor/repl_initiator"/>
</dbReference>
<dbReference type="NCBIfam" id="TIGR00362">
    <property type="entry name" value="DnaA"/>
    <property type="match status" value="1"/>
</dbReference>
<dbReference type="PANTHER" id="PTHR30050">
    <property type="entry name" value="CHROMOSOMAL REPLICATION INITIATOR PROTEIN DNAA"/>
    <property type="match status" value="1"/>
</dbReference>
<dbReference type="PANTHER" id="PTHR30050:SF2">
    <property type="entry name" value="CHROMOSOMAL REPLICATION INITIATOR PROTEIN DNAA"/>
    <property type="match status" value="1"/>
</dbReference>
<dbReference type="Pfam" id="PF00308">
    <property type="entry name" value="Bac_DnaA"/>
    <property type="match status" value="1"/>
</dbReference>
<dbReference type="Pfam" id="PF08299">
    <property type="entry name" value="Bac_DnaA_C"/>
    <property type="match status" value="1"/>
</dbReference>
<dbReference type="Pfam" id="PF11638">
    <property type="entry name" value="DnaA_N"/>
    <property type="match status" value="1"/>
</dbReference>
<dbReference type="PRINTS" id="PR00051">
    <property type="entry name" value="DNAA"/>
</dbReference>
<dbReference type="SMART" id="SM00382">
    <property type="entry name" value="AAA"/>
    <property type="match status" value="1"/>
</dbReference>
<dbReference type="SMART" id="SM00760">
    <property type="entry name" value="Bac_DnaA_C"/>
    <property type="match status" value="1"/>
</dbReference>
<dbReference type="SUPFAM" id="SSF52540">
    <property type="entry name" value="P-loop containing nucleoside triphosphate hydrolases"/>
    <property type="match status" value="1"/>
</dbReference>
<dbReference type="SUPFAM" id="SSF48295">
    <property type="entry name" value="TrpR-like"/>
    <property type="match status" value="1"/>
</dbReference>
<dbReference type="PROSITE" id="PS01008">
    <property type="entry name" value="DNAA"/>
    <property type="match status" value="1"/>
</dbReference>
<organism>
    <name type="scientific">Ehrlichia ruminantium (strain Welgevonden)</name>
    <dbReference type="NCBI Taxonomy" id="254945"/>
    <lineage>
        <taxon>Bacteria</taxon>
        <taxon>Pseudomonadati</taxon>
        <taxon>Pseudomonadota</taxon>
        <taxon>Alphaproteobacteria</taxon>
        <taxon>Rickettsiales</taxon>
        <taxon>Anaplasmataceae</taxon>
        <taxon>Ehrlichia</taxon>
    </lineage>
</organism>
<reference key="1">
    <citation type="journal article" date="2005" name="Proc. Natl. Acad. Sci. U.S.A.">
        <title>The genome of the heartwater agent Ehrlichia ruminantium contains multiple tandem repeats of actively variable copy number.</title>
        <authorList>
            <person name="Collins N.E."/>
            <person name="Liebenberg J."/>
            <person name="de Villiers E.P."/>
            <person name="Brayton K.A."/>
            <person name="Louw E."/>
            <person name="Pretorius A."/>
            <person name="Faber F.E."/>
            <person name="van Heerden H."/>
            <person name="Josemans A."/>
            <person name="van Kleef M."/>
            <person name="Steyn H.C."/>
            <person name="van Strijp M.F."/>
            <person name="Zweygarth E."/>
            <person name="Jongejan F."/>
            <person name="Maillard J.C."/>
            <person name="Berthier D."/>
            <person name="Botha M."/>
            <person name="Joubert F."/>
            <person name="Corton C.H."/>
            <person name="Thomson N.R."/>
            <person name="Allsopp M.T."/>
            <person name="Allsopp B.A."/>
        </authorList>
    </citation>
    <scope>NUCLEOTIDE SEQUENCE [LARGE SCALE GENOMIC DNA]</scope>
    <source>
        <strain>Welgevonden</strain>
    </source>
</reference>
<reference key="2">
    <citation type="journal article" date="2006" name="J. Bacteriol.">
        <title>Comparative genomic analysis of three strains of Ehrlichia ruminantium reveals an active process of genome size plasticity.</title>
        <authorList>
            <person name="Frutos R."/>
            <person name="Viari A."/>
            <person name="Ferraz C."/>
            <person name="Morgat A."/>
            <person name="Eychenie S."/>
            <person name="Kandassamy Y."/>
            <person name="Chantal I."/>
            <person name="Bensaid A."/>
            <person name="Coissac E."/>
            <person name="Vachiery N."/>
            <person name="Demaille J."/>
            <person name="Martinez D."/>
        </authorList>
    </citation>
    <scope>NUCLEOTIDE SEQUENCE [LARGE SCALE GENOMIC DNA]</scope>
    <source>
        <strain>Welgevonden</strain>
    </source>
</reference>
<feature type="chain" id="PRO_0000114177" description="Chromosomal replication initiator protein DnaA">
    <location>
        <begin position="1"/>
        <end position="464"/>
    </location>
</feature>
<feature type="region of interest" description="Domain I, interacts with DnaA modulators" evidence="1">
    <location>
        <begin position="1"/>
        <end position="90"/>
    </location>
</feature>
<feature type="region of interest" description="Domain II" evidence="1">
    <location>
        <begin position="90"/>
        <end position="126"/>
    </location>
</feature>
<feature type="region of interest" description="Domain III, AAA+ region" evidence="1">
    <location>
        <begin position="127"/>
        <end position="345"/>
    </location>
</feature>
<feature type="region of interest" description="Domain IV, binds dsDNA" evidence="1">
    <location>
        <begin position="346"/>
        <end position="464"/>
    </location>
</feature>
<feature type="binding site" evidence="1">
    <location>
        <position position="173"/>
    </location>
    <ligand>
        <name>ATP</name>
        <dbReference type="ChEBI" id="CHEBI:30616"/>
    </ligand>
</feature>
<feature type="binding site" evidence="1">
    <location>
        <position position="175"/>
    </location>
    <ligand>
        <name>ATP</name>
        <dbReference type="ChEBI" id="CHEBI:30616"/>
    </ligand>
</feature>
<feature type="binding site" evidence="1">
    <location>
        <position position="176"/>
    </location>
    <ligand>
        <name>ATP</name>
        <dbReference type="ChEBI" id="CHEBI:30616"/>
    </ligand>
</feature>
<feature type="binding site" evidence="1">
    <location>
        <position position="177"/>
    </location>
    <ligand>
        <name>ATP</name>
        <dbReference type="ChEBI" id="CHEBI:30616"/>
    </ligand>
</feature>
<accession>Q5HBP0</accession>
<accession>Q5FE86</accession>
<protein>
    <recommendedName>
        <fullName evidence="1">Chromosomal replication initiator protein DnaA</fullName>
    </recommendedName>
</protein>
<evidence type="ECO:0000255" key="1">
    <source>
        <dbReference type="HAMAP-Rule" id="MF_00377"/>
    </source>
</evidence>
<name>DNAA_EHRRW</name>
<proteinExistence type="inferred from homology"/>
<keyword id="KW-0067">ATP-binding</keyword>
<keyword id="KW-0963">Cytoplasm</keyword>
<keyword id="KW-0235">DNA replication</keyword>
<keyword id="KW-0238">DNA-binding</keyword>
<keyword id="KW-0446">Lipid-binding</keyword>
<keyword id="KW-0547">Nucleotide-binding</keyword>
<sequence length="464" mass="52675">MNNDNTEVLENYPQDGLQSNSHIIWKGIQSRLHKFYGNAIYDSWLSVLLYVSTESGKVLLSAPTRFIKEWILVHYLDQILKYWQDEDQSICSVDICVVSNQDPNLLVDIKDRVDRGIKGNCDNVSSPLDPRFTFDNFVVGKPNELAFAAARRVAESNSPISGSNPLFLYGGVGLGKTHLMHAIAWYIIKSCSKRKIAYLSAEKFMYQYVTALRSKDIMLFKEQFRSVDILMVDDVQFISGKDSTQEEFFHTFNALIDQNKQLVISADRSPSDLDGVEERIKSRLGWGLVADINETTFELRLGILQLKVEKMGINIPNKVLEFLAKNIKSNIRELEGALNKVVAHSSLVGCSITLDTASDILSDLLRANHKSVTLECIQKKVAEFFNIKVSDMYSTRRLRTLARPRQIAMYLSKKLTQKSLPEIGKSFGGRDHATVIHAVKQIEKLMDTDSKLRDDINLLNRMLR</sequence>